<keyword id="KW-0002">3D-structure</keyword>
<keyword id="KW-0106">Calcium</keyword>
<keyword id="KW-0223">Dioxygenase</keyword>
<keyword id="KW-0275">Fatty acid biosynthesis</keyword>
<keyword id="KW-0276">Fatty acid metabolism</keyword>
<keyword id="KW-0349">Heme</keyword>
<keyword id="KW-0408">Iron</keyword>
<keyword id="KW-0444">Lipid biosynthesis</keyword>
<keyword id="KW-0443">Lipid metabolism</keyword>
<keyword id="KW-0479">Metal-binding</keyword>
<keyword id="KW-0560">Oxidoreductase</keyword>
<keyword id="KW-0925">Oxylipin biosynthesis</keyword>
<keyword id="KW-0575">Peroxidase</keyword>
<keyword id="KW-0611">Plant defense</keyword>
<keyword id="KW-1185">Reference proteome</keyword>
<gene>
    <name evidence="5" type="primary">PIOX</name>
    <name evidence="8" type="ordered locus">Os12g0448900</name>
    <name evidence="7" type="ordered locus">LOC_Os12g26290</name>
</gene>
<feature type="chain" id="PRO_0000455382" description="Alpha-dioxygenase PIOX">
    <location>
        <begin position="1"/>
        <end position="618"/>
    </location>
</feature>
<feature type="active site" description="Proton acceptor" evidence="1">
    <location>
        <position position="157"/>
    </location>
</feature>
<feature type="binding site" evidence="4">
    <location>
        <position position="158"/>
    </location>
    <ligand>
        <name>Ca(2+)</name>
        <dbReference type="ChEBI" id="CHEBI:29108"/>
    </ligand>
</feature>
<feature type="binding site" evidence="4">
    <location>
        <position position="162"/>
    </location>
    <ligand>
        <name>heme b</name>
        <dbReference type="ChEBI" id="CHEBI:60344"/>
    </ligand>
</feature>
<feature type="binding site" evidence="4">
    <location>
        <position position="210"/>
    </location>
    <ligand>
        <name>Ca(2+)</name>
        <dbReference type="ChEBI" id="CHEBI:29108"/>
    </ligand>
</feature>
<feature type="binding site" evidence="4">
    <location>
        <position position="212"/>
    </location>
    <ligand>
        <name>Ca(2+)</name>
        <dbReference type="ChEBI" id="CHEBI:29108"/>
    </ligand>
</feature>
<feature type="binding site" evidence="4">
    <location>
        <position position="214"/>
    </location>
    <ligand>
        <name>Ca(2+)</name>
        <dbReference type="ChEBI" id="CHEBI:29108"/>
    </ligand>
</feature>
<feature type="binding site" evidence="4">
    <location>
        <position position="216"/>
    </location>
    <ligand>
        <name>Ca(2+)</name>
        <dbReference type="ChEBI" id="CHEBI:29108"/>
    </ligand>
</feature>
<feature type="binding site" evidence="4">
    <location>
        <position position="311"/>
    </location>
    <ligand>
        <name>hexadecanoate</name>
        <dbReference type="ChEBI" id="CHEBI:7896"/>
    </ligand>
</feature>
<feature type="binding site" description="axial binding residue" evidence="1 4">
    <location>
        <position position="382"/>
    </location>
    <ligand>
        <name>heme b</name>
        <dbReference type="ChEBI" id="CHEBI:60344"/>
    </ligand>
    <ligandPart>
        <name>Fe</name>
        <dbReference type="ChEBI" id="CHEBI:18248"/>
    </ligandPart>
</feature>
<feature type="binding site" evidence="4">
    <location>
        <position position="479"/>
    </location>
    <ligand>
        <name>heme b</name>
        <dbReference type="ChEBI" id="CHEBI:60344"/>
    </ligand>
</feature>
<feature type="binding site" evidence="4">
    <location>
        <position position="483"/>
    </location>
    <ligand>
        <name>heme b</name>
        <dbReference type="ChEBI" id="CHEBI:60344"/>
    </ligand>
</feature>
<feature type="binding site" evidence="4">
    <location>
        <position position="599"/>
    </location>
    <ligand>
        <name>hexadecanoate</name>
        <dbReference type="ChEBI" id="CHEBI:7896"/>
    </ligand>
</feature>
<feature type="site" description="Transition state stabilizer" evidence="1">
    <location>
        <position position="259"/>
    </location>
</feature>
<feature type="mutagenesis site" description="Abolishes oxygenase activity." evidence="2">
    <original>H</original>
    <variation>Q</variation>
    <location>
        <position position="157"/>
    </location>
</feature>
<feature type="mutagenesis site" description="Reduces oxygenase activity 3.75-fold." evidence="2">
    <original>H</original>
    <variation>Q</variation>
    <location>
        <position position="276"/>
    </location>
</feature>
<feature type="mutagenesis site" description="Reduces oxygenase activity 38-fold." evidence="3">
    <original>H</original>
    <variation>A</variation>
    <location>
        <position position="311"/>
    </location>
</feature>
<feature type="mutagenesis site" description="Abolishes oxygenase activity." evidence="3">
    <original>H</original>
    <variation>L</variation>
    <location>
        <position position="311"/>
    </location>
</feature>
<feature type="mutagenesis site" description="Reduces oxygenase activity 8.7-fold." evidence="3">
    <original>H</original>
    <variation>Q</variation>
    <location>
        <position position="311"/>
    </location>
</feature>
<feature type="mutagenesis site" description="Abolishes oxygenase activity." evidence="2 3">
    <original>Y</original>
    <variation>F</variation>
    <location>
        <position position="379"/>
    </location>
</feature>
<feature type="mutagenesis site" description="Reduces oxygenase activity 7.5-fold." evidence="2">
    <original>H</original>
    <variation>Q</variation>
    <location>
        <position position="382"/>
    </location>
</feature>
<feature type="mutagenesis site" description="Abolishes oxygenase activity." evidence="2">
    <original>S</original>
    <variation>A</variation>
    <location>
        <position position="557"/>
    </location>
</feature>
<feature type="mutagenesis site" description="Reduces oxygenase activity 2-fold." evidence="3">
    <original>R</original>
    <variation>A</variation>
    <location>
        <position position="558"/>
    </location>
</feature>
<feature type="mutagenesis site" description="Reduces oxygenase activity 5.5-fold." evidence="3">
    <original>R</original>
    <variation>K</variation>
    <location>
        <position position="558"/>
    </location>
</feature>
<feature type="mutagenesis site" description="Slightly reduces oxygenase activity." evidence="3">
    <original>R</original>
    <variation>L</variation>
    <location>
        <position position="558"/>
    </location>
</feature>
<feature type="mutagenesis site" description="Reduces oxygenase activity 250-fold." evidence="3">
    <original>R</original>
    <variation>A</variation>
    <location>
        <position position="559"/>
    </location>
</feature>
<feature type="mutagenesis site" description="Reduces oxygenase activity 71-fold." evidence="3">
    <original>R</original>
    <variation>E</variation>
    <location>
        <position position="559"/>
    </location>
</feature>
<feature type="mutagenesis site" description="Reduces oxygenase activity more than 100-fold." evidence="3">
    <original>R</original>
    <variation>K</variation>
    <location>
        <position position="559"/>
    </location>
</feature>
<feature type="mutagenesis site" description="Abolishes oxygenase activity." evidence="3">
    <original>R</original>
    <variation>L</variation>
    <location>
        <position position="559"/>
    </location>
</feature>
<feature type="helix" evidence="11">
    <location>
        <begin position="12"/>
        <end position="14"/>
    </location>
</feature>
<feature type="helix" evidence="11">
    <location>
        <begin position="15"/>
        <end position="20"/>
    </location>
</feature>
<feature type="helix" evidence="11">
    <location>
        <begin position="23"/>
        <end position="36"/>
    </location>
</feature>
<feature type="turn" evidence="11">
    <location>
        <begin position="37"/>
        <end position="39"/>
    </location>
</feature>
<feature type="helix" evidence="11">
    <location>
        <begin position="41"/>
        <end position="43"/>
    </location>
</feature>
<feature type="helix" evidence="11">
    <location>
        <begin position="46"/>
        <end position="63"/>
    </location>
</feature>
<feature type="helix" evidence="11">
    <location>
        <begin position="79"/>
        <end position="81"/>
    </location>
</feature>
<feature type="turn" evidence="11">
    <location>
        <begin position="97"/>
        <end position="100"/>
    </location>
</feature>
<feature type="strand" evidence="11">
    <location>
        <begin position="101"/>
        <end position="105"/>
    </location>
</feature>
<feature type="strand" evidence="11">
    <location>
        <begin position="107"/>
        <end position="110"/>
    </location>
</feature>
<feature type="helix" evidence="9">
    <location>
        <begin position="116"/>
        <end position="118"/>
    </location>
</feature>
<feature type="helix" evidence="11">
    <location>
        <begin position="124"/>
        <end position="131"/>
    </location>
</feature>
<feature type="helix" evidence="11">
    <location>
        <begin position="146"/>
        <end position="159"/>
    </location>
</feature>
<feature type="strand" evidence="11">
    <location>
        <begin position="169"/>
        <end position="172"/>
    </location>
</feature>
<feature type="helix" evidence="11">
    <location>
        <begin position="175"/>
        <end position="178"/>
    </location>
</feature>
<feature type="strand" evidence="11">
    <location>
        <begin position="182"/>
        <end position="188"/>
    </location>
</feature>
<feature type="strand" evidence="11">
    <location>
        <begin position="198"/>
        <end position="200"/>
    </location>
</feature>
<feature type="strand" evidence="11">
    <location>
        <begin position="206"/>
        <end position="209"/>
    </location>
</feature>
<feature type="strand" evidence="10">
    <location>
        <begin position="212"/>
        <end position="214"/>
    </location>
</feature>
<feature type="helix" evidence="11">
    <location>
        <begin position="216"/>
        <end position="219"/>
    </location>
</feature>
<feature type="helix" evidence="11">
    <location>
        <begin position="223"/>
        <end position="226"/>
    </location>
</feature>
<feature type="helix" evidence="11">
    <location>
        <begin position="227"/>
        <end position="229"/>
    </location>
</feature>
<feature type="strand" evidence="10">
    <location>
        <begin position="253"/>
        <end position="256"/>
    </location>
</feature>
<feature type="helix" evidence="11">
    <location>
        <begin position="263"/>
        <end position="286"/>
    </location>
</feature>
<feature type="helix" evidence="11">
    <location>
        <begin position="292"/>
        <end position="313"/>
    </location>
</feature>
<feature type="helix" evidence="11">
    <location>
        <begin position="315"/>
        <end position="319"/>
    </location>
</feature>
<feature type="helix" evidence="11">
    <location>
        <begin position="323"/>
        <end position="334"/>
    </location>
</feature>
<feature type="helix" evidence="11">
    <location>
        <begin position="339"/>
        <end position="345"/>
    </location>
</feature>
<feature type="turn" evidence="11">
    <location>
        <begin position="351"/>
        <end position="354"/>
    </location>
</feature>
<feature type="helix" evidence="11">
    <location>
        <begin position="373"/>
        <end position="378"/>
    </location>
</feature>
<feature type="helix" evidence="11">
    <location>
        <begin position="382"/>
        <end position="384"/>
    </location>
</feature>
<feature type="strand" evidence="11">
    <location>
        <begin position="387"/>
        <end position="392"/>
    </location>
</feature>
<feature type="strand" evidence="9">
    <location>
        <begin position="400"/>
        <end position="403"/>
    </location>
</feature>
<feature type="strand" evidence="11">
    <location>
        <begin position="406"/>
        <end position="411"/>
    </location>
</feature>
<feature type="helix" evidence="11">
    <location>
        <begin position="412"/>
        <end position="415"/>
    </location>
</feature>
<feature type="helix" evidence="11">
    <location>
        <begin position="417"/>
        <end position="427"/>
    </location>
</feature>
<feature type="helix" evidence="11">
    <location>
        <begin position="429"/>
        <end position="437"/>
    </location>
</feature>
<feature type="strand" evidence="11">
    <location>
        <begin position="444"/>
        <end position="447"/>
    </location>
</feature>
<feature type="helix" evidence="11">
    <location>
        <begin position="451"/>
        <end position="455"/>
    </location>
</feature>
<feature type="helix" evidence="11">
    <location>
        <begin position="472"/>
        <end position="482"/>
    </location>
</feature>
<feature type="helix" evidence="11">
    <location>
        <begin position="488"/>
        <end position="494"/>
    </location>
</feature>
<feature type="helix" evidence="11">
    <location>
        <begin position="503"/>
        <end position="505"/>
    </location>
</feature>
<feature type="helix" evidence="11">
    <location>
        <begin position="510"/>
        <end position="520"/>
    </location>
</feature>
<feature type="turn" evidence="11">
    <location>
        <begin position="524"/>
        <end position="526"/>
    </location>
</feature>
<feature type="helix" evidence="11">
    <location>
        <begin position="529"/>
        <end position="535"/>
    </location>
</feature>
<feature type="strand" evidence="11">
    <location>
        <begin position="542"/>
        <end position="544"/>
    </location>
</feature>
<feature type="helix" evidence="11">
    <location>
        <begin position="546"/>
        <end position="561"/>
    </location>
</feature>
<feature type="helix" evidence="11">
    <location>
        <begin position="564"/>
        <end position="566"/>
    </location>
</feature>
<feature type="turn" evidence="11">
    <location>
        <begin position="567"/>
        <end position="569"/>
    </location>
</feature>
<feature type="helix" evidence="11">
    <location>
        <begin position="572"/>
        <end position="575"/>
    </location>
</feature>
<feature type="helix" evidence="11">
    <location>
        <begin position="577"/>
        <end position="584"/>
    </location>
</feature>
<feature type="helix" evidence="11">
    <location>
        <begin position="589"/>
        <end position="596"/>
    </location>
</feature>
<feature type="helix" evidence="11">
    <location>
        <begin position="598"/>
        <end position="604"/>
    </location>
</feature>
<feature type="strand" evidence="11">
    <location>
        <begin position="607"/>
        <end position="609"/>
    </location>
</feature>
<proteinExistence type="evidence at protein level"/>
<evidence type="ECO:0000255" key="1">
    <source>
        <dbReference type="PROSITE-ProRule" id="PRU00298"/>
    </source>
</evidence>
<evidence type="ECO:0000269" key="2">
    <source>
    </source>
</evidence>
<evidence type="ECO:0000269" key="3">
    <source>
    </source>
</evidence>
<evidence type="ECO:0000269" key="4">
    <source>
    </source>
</evidence>
<evidence type="ECO:0000303" key="5">
    <source>
    </source>
</evidence>
<evidence type="ECO:0000305" key="6"/>
<evidence type="ECO:0000312" key="7">
    <source>
        <dbReference type="EMBL" id="ABA98060.2"/>
    </source>
</evidence>
<evidence type="ECO:0000312" key="8">
    <source>
        <dbReference type="EMBL" id="BAT17016.1"/>
    </source>
</evidence>
<evidence type="ECO:0007829" key="9">
    <source>
        <dbReference type="PDB" id="4KVJ"/>
    </source>
</evidence>
<evidence type="ECO:0007829" key="10">
    <source>
        <dbReference type="PDB" id="4KVK"/>
    </source>
</evidence>
<evidence type="ECO:0007829" key="11">
    <source>
        <dbReference type="PDB" id="4KVL"/>
    </source>
</evidence>
<organism>
    <name type="scientific">Oryza sativa subsp. japonica</name>
    <name type="common">Rice</name>
    <dbReference type="NCBI Taxonomy" id="39947"/>
    <lineage>
        <taxon>Eukaryota</taxon>
        <taxon>Viridiplantae</taxon>
        <taxon>Streptophyta</taxon>
        <taxon>Embryophyta</taxon>
        <taxon>Tracheophyta</taxon>
        <taxon>Spermatophyta</taxon>
        <taxon>Magnoliopsida</taxon>
        <taxon>Liliopsida</taxon>
        <taxon>Poales</taxon>
        <taxon>Poaceae</taxon>
        <taxon>BOP clade</taxon>
        <taxon>Oryzoideae</taxon>
        <taxon>Oryzeae</taxon>
        <taxon>Oryzinae</taxon>
        <taxon>Oryza</taxon>
        <taxon>Oryza sativa</taxon>
    </lineage>
</organism>
<name>PIOX_ORYSJ</name>
<accession>Q2QRV3</accession>
<accession>Q0INH8</accession>
<accession>Q9M5J1</accession>
<dbReference type="EC" id="1.13.11.92" evidence="2 3"/>
<dbReference type="EMBL" id="AF229813">
    <property type="protein sequence ID" value="AAF64042.2"/>
    <property type="molecule type" value="mRNA"/>
</dbReference>
<dbReference type="EMBL" id="DP000011">
    <property type="protein sequence ID" value="ABA98060.2"/>
    <property type="molecule type" value="Genomic_DNA"/>
</dbReference>
<dbReference type="EMBL" id="DP000011">
    <property type="protein sequence ID" value="ABG22010.1"/>
    <property type="molecule type" value="Genomic_DNA"/>
</dbReference>
<dbReference type="EMBL" id="AP014968">
    <property type="protein sequence ID" value="BAT17016.1"/>
    <property type="molecule type" value="Genomic_DNA"/>
</dbReference>
<dbReference type="PDB" id="4KVJ">
    <property type="method" value="X-ray"/>
    <property type="resolution" value="2.12 A"/>
    <property type="chains" value="A=10-618"/>
</dbReference>
<dbReference type="PDB" id="4KVK">
    <property type="method" value="X-ray"/>
    <property type="resolution" value="1.98 A"/>
    <property type="chains" value="A=10-618"/>
</dbReference>
<dbReference type="PDB" id="4KVL">
    <property type="method" value="X-ray"/>
    <property type="resolution" value="1.96 A"/>
    <property type="chains" value="A=10-618"/>
</dbReference>
<dbReference type="PDBsum" id="4KVJ"/>
<dbReference type="PDBsum" id="4KVK"/>
<dbReference type="PDBsum" id="4KVL"/>
<dbReference type="SMR" id="Q2QRV3"/>
<dbReference type="FunCoup" id="Q2QRV3">
    <property type="interactions" value="1430"/>
</dbReference>
<dbReference type="STRING" id="39947.Q2QRV3"/>
<dbReference type="PeroxiBase" id="4159">
    <property type="entry name" value="OsDiOx01"/>
</dbReference>
<dbReference type="PaxDb" id="39947-Q2QRV3"/>
<dbReference type="EnsemblPlants" id="Os12t0448900-01">
    <property type="protein sequence ID" value="Os12t0448900-01"/>
    <property type="gene ID" value="Os12g0448900"/>
</dbReference>
<dbReference type="Gramene" id="Os12t0448900-01">
    <property type="protein sequence ID" value="Os12t0448900-01"/>
    <property type="gene ID" value="Os12g0448900"/>
</dbReference>
<dbReference type="KEGG" id="osa:4352160"/>
<dbReference type="eggNOG" id="KOG2408">
    <property type="taxonomic scope" value="Eukaryota"/>
</dbReference>
<dbReference type="HOGENOM" id="CLU_033051_0_0_1"/>
<dbReference type="InParanoid" id="Q2QRV3"/>
<dbReference type="OMA" id="AFAPWTK"/>
<dbReference type="OrthoDB" id="823504at2759"/>
<dbReference type="BRENDA" id="1.13.11.92">
    <property type="organism ID" value="4460"/>
</dbReference>
<dbReference type="EvolutionaryTrace" id="Q2QRV3"/>
<dbReference type="Proteomes" id="UP000059680">
    <property type="component" value="Chromosome 12"/>
</dbReference>
<dbReference type="GO" id="GO:0012511">
    <property type="term" value="C:monolayer-surrounded lipid storage body"/>
    <property type="evidence" value="ECO:0007669"/>
    <property type="project" value="EnsemblPlants"/>
</dbReference>
<dbReference type="GO" id="GO:0020037">
    <property type="term" value="F:heme binding"/>
    <property type="evidence" value="ECO:0007669"/>
    <property type="project" value="InterPro"/>
</dbReference>
<dbReference type="GO" id="GO:0046872">
    <property type="term" value="F:metal ion binding"/>
    <property type="evidence" value="ECO:0007669"/>
    <property type="project" value="UniProtKB-KW"/>
</dbReference>
<dbReference type="GO" id="GO:0016702">
    <property type="term" value="F:oxidoreductase activity, acting on single donors with incorporation of molecular oxygen, incorporation of two atoms of oxygen"/>
    <property type="evidence" value="ECO:0000318"/>
    <property type="project" value="GO_Central"/>
</dbReference>
<dbReference type="GO" id="GO:0004601">
    <property type="term" value="F:peroxidase activity"/>
    <property type="evidence" value="ECO:0007669"/>
    <property type="project" value="UniProtKB-KW"/>
</dbReference>
<dbReference type="GO" id="GO:1902609">
    <property type="term" value="P:(R)-2-hydroxy-alpha-linolenic acid biosynthetic process"/>
    <property type="evidence" value="ECO:0007669"/>
    <property type="project" value="EnsemblPlants"/>
</dbReference>
<dbReference type="GO" id="GO:0071732">
    <property type="term" value="P:cellular response to nitric oxide"/>
    <property type="evidence" value="ECO:0007669"/>
    <property type="project" value="EnsemblPlants"/>
</dbReference>
<dbReference type="GO" id="GO:0034614">
    <property type="term" value="P:cellular response to reactive oxygen species"/>
    <property type="evidence" value="ECO:0007669"/>
    <property type="project" value="EnsemblPlants"/>
</dbReference>
<dbReference type="GO" id="GO:0071446">
    <property type="term" value="P:cellular response to salicylic acid stimulus"/>
    <property type="evidence" value="ECO:0007669"/>
    <property type="project" value="EnsemblPlants"/>
</dbReference>
<dbReference type="GO" id="GO:0042742">
    <property type="term" value="P:defense response to bacterium"/>
    <property type="evidence" value="ECO:0007669"/>
    <property type="project" value="EnsemblPlants"/>
</dbReference>
<dbReference type="GO" id="GO:0050832">
    <property type="term" value="P:defense response to fungus"/>
    <property type="evidence" value="ECO:0007669"/>
    <property type="project" value="EnsemblPlants"/>
</dbReference>
<dbReference type="GO" id="GO:0001561">
    <property type="term" value="P:fatty acid alpha-oxidation"/>
    <property type="evidence" value="ECO:0007669"/>
    <property type="project" value="EnsemblPlants"/>
</dbReference>
<dbReference type="GO" id="GO:0031408">
    <property type="term" value="P:oxylipin biosynthetic process"/>
    <property type="evidence" value="ECO:0007669"/>
    <property type="project" value="UniProtKB-KW"/>
</dbReference>
<dbReference type="GO" id="GO:0009737">
    <property type="term" value="P:response to abscisic acid"/>
    <property type="evidence" value="ECO:0007669"/>
    <property type="project" value="EnsemblPlants"/>
</dbReference>
<dbReference type="GO" id="GO:0009627">
    <property type="term" value="P:systemic acquired resistance"/>
    <property type="evidence" value="ECO:0007669"/>
    <property type="project" value="EnsemblPlants"/>
</dbReference>
<dbReference type="CDD" id="cd09818">
    <property type="entry name" value="PIOX_like"/>
    <property type="match status" value="1"/>
</dbReference>
<dbReference type="Gene3D" id="1.10.640.10">
    <property type="entry name" value="Haem peroxidase domain superfamily, animal type"/>
    <property type="match status" value="1"/>
</dbReference>
<dbReference type="InterPro" id="IPR034815">
    <property type="entry name" value="A_dioxygenase"/>
</dbReference>
<dbReference type="InterPro" id="IPR019791">
    <property type="entry name" value="Haem_peroxidase_animal"/>
</dbReference>
<dbReference type="InterPro" id="IPR010255">
    <property type="entry name" value="Haem_peroxidase_sf"/>
</dbReference>
<dbReference type="InterPro" id="IPR037120">
    <property type="entry name" value="Haem_peroxidase_sf_animal"/>
</dbReference>
<dbReference type="InterPro" id="IPR050783">
    <property type="entry name" value="Oxylipin_biosynth_metab"/>
</dbReference>
<dbReference type="PANTHER" id="PTHR11903:SF11">
    <property type="entry name" value="ALPHA-DIOXYGENASE 1"/>
    <property type="match status" value="1"/>
</dbReference>
<dbReference type="PANTHER" id="PTHR11903">
    <property type="entry name" value="PROSTAGLANDIN G/H SYNTHASE"/>
    <property type="match status" value="1"/>
</dbReference>
<dbReference type="Pfam" id="PF03098">
    <property type="entry name" value="An_peroxidase"/>
    <property type="match status" value="1"/>
</dbReference>
<dbReference type="SUPFAM" id="SSF48113">
    <property type="entry name" value="Heme-dependent peroxidases"/>
    <property type="match status" value="1"/>
</dbReference>
<dbReference type="PROSITE" id="PS50292">
    <property type="entry name" value="PEROXIDASE_3"/>
    <property type="match status" value="1"/>
</dbReference>
<reference key="1">
    <citation type="submission" date="2007-03" db="EMBL/GenBank/DDBJ databases">
        <title>Fatty acid alpha-oxidases in rice plants.</title>
        <authorList>
            <person name="Matsui K."/>
            <person name="Koeduka T."/>
            <person name="Akakabe Y."/>
            <person name="Kajiwara T."/>
        </authorList>
    </citation>
    <scope>NUCLEOTIDE SEQUENCE [MRNA]</scope>
</reference>
<reference key="2">
    <citation type="journal article" date="2005" name="BMC Biol.">
        <title>The sequence of rice chromosomes 11 and 12, rich in disease resistance genes and recent gene duplications.</title>
        <authorList>
            <consortium name="The rice chromosomes 11 and 12 sequencing consortia"/>
        </authorList>
    </citation>
    <scope>NUCLEOTIDE SEQUENCE [LARGE SCALE GENOMIC DNA]</scope>
    <source>
        <strain>cv. Nipponbare</strain>
    </source>
</reference>
<reference key="3">
    <citation type="journal article" date="2005" name="Nature">
        <title>The map-based sequence of the rice genome.</title>
        <authorList>
            <consortium name="International rice genome sequencing project (IRGSP)"/>
        </authorList>
    </citation>
    <scope>NUCLEOTIDE SEQUENCE [LARGE SCALE GENOMIC DNA]</scope>
    <source>
        <strain>cv. Nipponbare</strain>
    </source>
</reference>
<reference key="4">
    <citation type="journal article" date="2013" name="Rice">
        <title>Improvement of the Oryza sativa Nipponbare reference genome using next generation sequence and optical map data.</title>
        <authorList>
            <person name="Kawahara Y."/>
            <person name="de la Bastide M."/>
            <person name="Hamilton J.P."/>
            <person name="Kanamori H."/>
            <person name="McCombie W.R."/>
            <person name="Ouyang S."/>
            <person name="Schwartz D.C."/>
            <person name="Tanaka T."/>
            <person name="Wu J."/>
            <person name="Zhou S."/>
            <person name="Childs K.L."/>
            <person name="Davidson R.M."/>
            <person name="Lin H."/>
            <person name="Quesada-Ocampo L."/>
            <person name="Vaillancourt B."/>
            <person name="Sakai H."/>
            <person name="Lee S.S."/>
            <person name="Kim J."/>
            <person name="Numa H."/>
            <person name="Itoh T."/>
            <person name="Buell C.R."/>
            <person name="Matsumoto T."/>
        </authorList>
    </citation>
    <scope>GENOME REANNOTATION</scope>
    <source>
        <strain>cv. Nipponbare</strain>
    </source>
</reference>
<reference key="5">
    <citation type="journal article" date="2002" name="J. Biol. Chem.">
        <title>Catalytic properties of rice alpha-oxygenase. A comparison with mammalian prostaglandin H synthases.</title>
        <authorList>
            <person name="Koeduka T."/>
            <person name="Matsui K."/>
            <person name="Akakabe Y."/>
            <person name="Kajiwara T."/>
        </authorList>
    </citation>
    <scope>FUNCTION</scope>
    <scope>CATALYTIC ACTIVITY</scope>
    <scope>MUTAGENESIS OF HIS-157; HIS-276; TYR-379; HIS-382 AND SER-557</scope>
</reference>
<reference key="6">
    <citation type="journal article" date="2008" name="J. Biol. Chem.">
        <title>His-311 and Arg-559 are key residues involved in fatty acid oxygenation in pathogen-inducible oxygenase.</title>
        <authorList>
            <person name="Koszelak-Rosenblum M."/>
            <person name="Krol A.C."/>
            <person name="Simmons D.M."/>
            <person name="Goulah C.C."/>
            <person name="Wroblewski L."/>
            <person name="Malkowski M.G."/>
        </authorList>
    </citation>
    <scope>FUNCTION</scope>
    <scope>CATALYTIC ACTIVITY</scope>
    <scope>MUTAGENESIS OF HIS-311; TYR-379; ARG-558 AND ARG-559</scope>
</reference>
<reference key="7">
    <citation type="journal article" date="2011" name="Biochemistry">
        <title>Experimental and computational investigations of oxygen reactivity in a heme and tyrosyl radical-containing fatty acid alpha-(di)oxygenase.</title>
        <authorList>
            <person name="Huff G.S."/>
            <person name="Doncheva I.S."/>
            <person name="Brinkley D.W."/>
            <person name="Angeles-Boza A.M."/>
            <person name="Mukherjee A."/>
            <person name="Cramer C.J."/>
            <person name="Roth J.P."/>
        </authorList>
    </citation>
    <scope>FUNCTION</scope>
</reference>
<reference key="8">
    <citation type="journal article" date="2013" name="Protein Sci.">
        <title>Crystal structures of alpha-dioxygenase from Oryza sativa: insights into substrate binding and activation by hydrogen peroxide.</title>
        <authorList>
            <person name="Zhu G."/>
            <person name="Koszelak-Rosenblum M."/>
            <person name="Malkowski M.G."/>
        </authorList>
    </citation>
    <scope>X-RAY CRYSTALLOGRAPHY (1.96 ANGSTROMS) OF 10-618 IN COMPLEX WITH HEXADECANOATE; HEME AND CALCIUM ION</scope>
    <scope>COFACTOR</scope>
</reference>
<sequence>MGSGLFKPRVHPDLRDVFSKMSFFDKIGFLFIHAFDKRNLWHKVPVPIGLLYLNTRRTLLEKYNLLAVGRSSHGALFDPKEFLYRTEDGKYNDPHNAEAGSQNTFFGRNMEPVDQQDELMSPDPFVVATKLLARREYKDTGKQFNILAAAWIQFMVHDWMDHMEDTGQIGITAPKEVANECPLKSFKFHPTKELPTNSDGIKIGHYNIRTAWWDGSAVYGNNEERAEKLRTYVDGKLVIGDDGLLLHKENGVALSGDIRNSWAGVSILQALFVKEHNAVCDAIKEEHPNLSDEELYRYAKLVTSAVIAKVHTIDWTVELLKTKTMRAAMRANWYGLLGKKIKDTFGHIGGPILGGLVGLKKPNNHGVPYSLTEEFTSVYRMHSLIPSTLKLRDPTGQPDANNSPPCLEDIDIGEMIGLKGEEQLSKIGFEKQALSMGYQACGALELWNYPSFFRNLIPQNLDGTNRSDRIDLAALEVYRDRERSVPRYNEFRRRLFLIPIKSWEDLTSDKDAIETIRAIYGDDVEKLDLLVGLMAEKKIKGFAISETAFNIFILMASRRLEADRFFTSNFNEETYTKKGMQWVKTTEGLRDVINRHYPEITAKWMKSSSAFSVWDADY</sequence>
<comment type="function">
    <text evidence="2 3">Alpha-dioxygenase that catalyzes the primary oxygenation step of a variety of 14-20 carbon fatty acids, containing up to three unsaturated bonds, into their corresponding 2R-hydroperoxides (PubMed:11909851, PubMed:18596034). Involved in the production of oxylipins that function in cell signaling, wound healing, and protection from infection (PubMed:11909851, PubMed:18596034).</text>
</comment>
<comment type="catalytic activity">
    <reaction evidence="2 3">
        <text>a 1,2-saturated fatty acid + O2 = a (2R)-2-hydroperoxy fatty acid</text>
        <dbReference type="Rhea" id="RHEA:63508"/>
        <dbReference type="ChEBI" id="CHEBI:15379"/>
        <dbReference type="ChEBI" id="CHEBI:83955"/>
        <dbReference type="ChEBI" id="CHEBI:147340"/>
        <dbReference type="EC" id="1.13.11.92"/>
    </reaction>
    <physiologicalReaction direction="left-to-right" evidence="2 3">
        <dbReference type="Rhea" id="RHEA:63509"/>
    </physiologicalReaction>
</comment>
<comment type="catalytic activity">
    <reaction evidence="2 3">
        <text>(9Z,12Z)-octadecadienoate + O2 = (2R,9Z,12Z)-2-hydroperoxyoctadecadienoate</text>
        <dbReference type="Rhea" id="RHEA:63860"/>
        <dbReference type="ChEBI" id="CHEBI:15379"/>
        <dbReference type="ChEBI" id="CHEBI:30245"/>
        <dbReference type="ChEBI" id="CHEBI:149618"/>
        <dbReference type="EC" id="1.13.11.92"/>
    </reaction>
    <physiologicalReaction direction="left-to-right" evidence="2 3">
        <dbReference type="Rhea" id="RHEA:63861"/>
    </physiologicalReaction>
</comment>
<comment type="catalytic activity">
    <reaction evidence="2 3">
        <text>hexadecanoate + O2 = (2R)-2-hydroperoxyhexadecanoate</text>
        <dbReference type="Rhea" id="RHEA:63836"/>
        <dbReference type="ChEBI" id="CHEBI:7896"/>
        <dbReference type="ChEBI" id="CHEBI:15379"/>
        <dbReference type="ChEBI" id="CHEBI:149616"/>
        <dbReference type="EC" id="1.13.11.92"/>
    </reaction>
    <physiologicalReaction direction="left-to-right" evidence="2 3">
        <dbReference type="Rhea" id="RHEA:63837"/>
    </physiologicalReaction>
</comment>
<comment type="catalytic activity">
    <reaction evidence="3">
        <text>(9Z,12Z,15Z)-octadecatrienoate + O2 = (R)-2-hydroperoxy-(9Z,12Z,15Z)-octadecatrienoate</text>
        <dbReference type="Rhea" id="RHEA:16329"/>
        <dbReference type="ChEBI" id="CHEBI:15379"/>
        <dbReference type="ChEBI" id="CHEBI:32387"/>
        <dbReference type="ChEBI" id="CHEBI:76161"/>
        <dbReference type="EC" id="1.13.11.92"/>
    </reaction>
    <physiologicalReaction direction="left-to-right" evidence="3">
        <dbReference type="Rhea" id="RHEA:16330"/>
    </physiologicalReaction>
</comment>
<comment type="catalytic activity">
    <reaction evidence="3">
        <text>tetradecanoate + O2 = (2R)-2-hydroperoxytetradecanoate</text>
        <dbReference type="Rhea" id="RHEA:63856"/>
        <dbReference type="ChEBI" id="CHEBI:15379"/>
        <dbReference type="ChEBI" id="CHEBI:30807"/>
        <dbReference type="ChEBI" id="CHEBI:149617"/>
        <dbReference type="EC" id="1.13.11.92"/>
    </reaction>
    <physiologicalReaction direction="left-to-right" evidence="3">
        <dbReference type="Rhea" id="RHEA:63857"/>
    </physiologicalReaction>
</comment>
<comment type="catalytic activity">
    <reaction evidence="3">
        <text>octadecanoate + O2 = (2R)-2-hydroperoxyoctadecanoate</text>
        <dbReference type="Rhea" id="RHEA:63864"/>
        <dbReference type="ChEBI" id="CHEBI:15379"/>
        <dbReference type="ChEBI" id="CHEBI:25629"/>
        <dbReference type="ChEBI" id="CHEBI:149622"/>
        <dbReference type="EC" id="1.13.11.92"/>
    </reaction>
    <physiologicalReaction direction="left-to-right" evidence="3">
        <dbReference type="Rhea" id="RHEA:63865"/>
    </physiologicalReaction>
</comment>
<comment type="catalytic activity">
    <reaction evidence="3">
        <text>(9Z)-octadecenoate + O2 = (2R,9Z)-2-hydroperoxyoctadecenoate</text>
        <dbReference type="Rhea" id="RHEA:63868"/>
        <dbReference type="ChEBI" id="CHEBI:15379"/>
        <dbReference type="ChEBI" id="CHEBI:30823"/>
        <dbReference type="ChEBI" id="CHEBI:149623"/>
        <dbReference type="EC" id="1.13.11.92"/>
    </reaction>
    <physiologicalReaction direction="left-to-right" evidence="3">
        <dbReference type="Rhea" id="RHEA:63869"/>
    </physiologicalReaction>
</comment>
<comment type="cofactor">
    <cofactor evidence="4">
        <name>heme b</name>
        <dbReference type="ChEBI" id="CHEBI:60344"/>
    </cofactor>
    <text evidence="4">Binds 1 heme b (iron(II)-protoporphyrin IX) group per subunit.</text>
</comment>
<comment type="cofactor">
    <cofactor evidence="4">
        <name>Ca(2+)</name>
        <dbReference type="ChEBI" id="CHEBI:29108"/>
    </cofactor>
    <text evidence="4">Binds 1 calcium ion per subunit.</text>
</comment>
<comment type="similarity">
    <text evidence="1">Belongs to the peroxidase family.</text>
</comment>
<protein>
    <recommendedName>
        <fullName evidence="6">Alpha-dioxygenase PIOX</fullName>
        <ecNumber evidence="2 3">1.13.11.92</ecNumber>
    </recommendedName>
    <alternativeName>
        <fullName evidence="5">Pathogen-induced oxygenase</fullName>
    </alternativeName>
</protein>